<dbReference type="EC" id="3.6.5.-" evidence="2"/>
<dbReference type="EMBL" id="AJ250375">
    <property type="protein sequence ID" value="CAC05583.1"/>
    <property type="molecule type" value="mRNA"/>
</dbReference>
<dbReference type="EMBL" id="AK014889">
    <property type="protein sequence ID" value="BAB29605.1"/>
    <property type="status" value="ALT_INIT"/>
    <property type="molecule type" value="mRNA"/>
</dbReference>
<dbReference type="EMBL" id="AK014280">
    <property type="protein sequence ID" value="BAB29240.3"/>
    <property type="status" value="ALT_INIT"/>
    <property type="molecule type" value="mRNA"/>
</dbReference>
<dbReference type="EMBL" id="AK021250">
    <property type="status" value="NOT_ANNOTATED_CDS"/>
    <property type="molecule type" value="mRNA"/>
</dbReference>
<dbReference type="EMBL" id="AK032275">
    <property type="protein sequence ID" value="BAC27790.1"/>
    <property type="status" value="ALT_INIT"/>
    <property type="molecule type" value="mRNA"/>
</dbReference>
<dbReference type="EMBL" id="AK088960">
    <property type="protein sequence ID" value="BAC40673.1"/>
    <property type="status" value="ALT_INIT"/>
    <property type="molecule type" value="mRNA"/>
</dbReference>
<dbReference type="EMBL" id="BC019566">
    <property type="protein sequence ID" value="AAH19566.2"/>
    <property type="molecule type" value="mRNA"/>
</dbReference>
<dbReference type="CCDS" id="CCDS89651.1">
    <molecule id="Q9ER88-1"/>
</dbReference>
<dbReference type="RefSeq" id="NP_001158005.1">
    <property type="nucleotide sequence ID" value="NM_001164533.1"/>
</dbReference>
<dbReference type="RefSeq" id="NP_001355348.1">
    <molecule id="Q9ER88-1"/>
    <property type="nucleotide sequence ID" value="NM_001368419.1"/>
</dbReference>
<dbReference type="RefSeq" id="NP_075370.2">
    <property type="nucleotide sequence ID" value="NM_022994.3"/>
</dbReference>
<dbReference type="RefSeq" id="XP_006501925.1">
    <property type="nucleotide sequence ID" value="XM_006501862.3"/>
</dbReference>
<dbReference type="RefSeq" id="XP_006501926.1">
    <molecule id="Q9ER88-1"/>
    <property type="nucleotide sequence ID" value="XM_006501863.5"/>
</dbReference>
<dbReference type="RefSeq" id="XP_006501927.1">
    <molecule id="Q9ER88-1"/>
    <property type="nucleotide sequence ID" value="XM_006501864.3"/>
</dbReference>
<dbReference type="RefSeq" id="XP_006501932.1">
    <molecule id="Q9ER88-1"/>
    <property type="nucleotide sequence ID" value="XM_006501869.5"/>
</dbReference>
<dbReference type="RefSeq" id="XP_030108605.1">
    <molecule id="Q9ER88-2"/>
    <property type="nucleotide sequence ID" value="XM_030252745.1"/>
</dbReference>
<dbReference type="PDB" id="7PNT">
    <property type="method" value="EM"/>
    <property type="resolution" value="3.19 A"/>
    <property type="chains" value="X=1-391"/>
</dbReference>
<dbReference type="PDB" id="7PNU">
    <property type="method" value="EM"/>
    <property type="resolution" value="3.06 A"/>
    <property type="chains" value="X=1-391"/>
</dbReference>
<dbReference type="PDB" id="7PNV">
    <property type="method" value="EM"/>
    <property type="resolution" value="3.06 A"/>
    <property type="chains" value="X=1-391"/>
</dbReference>
<dbReference type="PDB" id="7PNW">
    <property type="method" value="EM"/>
    <property type="resolution" value="3.09 A"/>
    <property type="chains" value="X=1-391"/>
</dbReference>
<dbReference type="PDBsum" id="7PNT"/>
<dbReference type="PDBsum" id="7PNU"/>
<dbReference type="PDBsum" id="7PNV"/>
<dbReference type="PDBsum" id="7PNW"/>
<dbReference type="EMDB" id="EMD-13551"/>
<dbReference type="EMDB" id="EMD-13552"/>
<dbReference type="EMDB" id="EMD-13553"/>
<dbReference type="EMDB" id="EMD-13554"/>
<dbReference type="SMR" id="Q9ER88"/>
<dbReference type="BioGRID" id="211134">
    <property type="interactions" value="9"/>
</dbReference>
<dbReference type="ComplexPortal" id="CPX-5301">
    <property type="entry name" value="28S mitochondrial small ribosomal subunit"/>
</dbReference>
<dbReference type="FunCoup" id="Q9ER88">
    <property type="interactions" value="3399"/>
</dbReference>
<dbReference type="IntAct" id="Q9ER88">
    <property type="interactions" value="1"/>
</dbReference>
<dbReference type="STRING" id="10090.ENSMUSP00000088456"/>
<dbReference type="GlyGen" id="Q9ER88">
    <property type="glycosylation" value="1 site, 1 O-linked glycan (1 site)"/>
</dbReference>
<dbReference type="iPTMnet" id="Q9ER88"/>
<dbReference type="PhosphoSitePlus" id="Q9ER88"/>
<dbReference type="SwissPalm" id="Q9ER88"/>
<dbReference type="jPOST" id="Q9ER88"/>
<dbReference type="PaxDb" id="10090-ENSMUSP00000088456"/>
<dbReference type="PeptideAtlas" id="Q9ER88"/>
<dbReference type="ProteomicsDB" id="262721">
    <molecule id="Q9ER88-1"/>
</dbReference>
<dbReference type="ProteomicsDB" id="262722">
    <molecule id="Q9ER88-2"/>
</dbReference>
<dbReference type="Pumba" id="Q9ER88"/>
<dbReference type="Antibodypedia" id="1656">
    <property type="antibodies" value="486 antibodies from 37 providers"/>
</dbReference>
<dbReference type="DNASU" id="65111"/>
<dbReference type="Ensembl" id="ENSMUST00000173135.8">
    <molecule id="Q9ER88-1"/>
    <property type="protein sequence ID" value="ENSMUSP00000134422.2"/>
    <property type="gene ID" value="ENSMUSG00000068921.15"/>
</dbReference>
<dbReference type="GeneID" id="65111"/>
<dbReference type="KEGG" id="mmu:65111"/>
<dbReference type="UCSC" id="uc008pxh.2">
    <molecule id="Q9ER88-2"/>
    <property type="organism name" value="mouse"/>
</dbReference>
<dbReference type="AGR" id="MGI:1929538"/>
<dbReference type="CTD" id="7818"/>
<dbReference type="MGI" id="MGI:1929538">
    <property type="gene designation" value="Dap3"/>
</dbReference>
<dbReference type="VEuPathDB" id="HostDB:ENSMUSG00000068921"/>
<dbReference type="eggNOG" id="KOG3928">
    <property type="taxonomic scope" value="Eukaryota"/>
</dbReference>
<dbReference type="GeneTree" id="ENSGT00390000015248"/>
<dbReference type="InParanoid" id="Q9ER88"/>
<dbReference type="OMA" id="DITNYDW"/>
<dbReference type="OrthoDB" id="274828at2759"/>
<dbReference type="PhylomeDB" id="Q9ER88"/>
<dbReference type="Reactome" id="R-MMU-5389840">
    <property type="pathway name" value="Mitochondrial translation elongation"/>
</dbReference>
<dbReference type="Reactome" id="R-MMU-5419276">
    <property type="pathway name" value="Mitochondrial translation termination"/>
</dbReference>
<dbReference type="BioGRID-ORCS" id="65111">
    <property type="hits" value="20 hits in 79 CRISPR screens"/>
</dbReference>
<dbReference type="ChiTaRS" id="Dap3">
    <property type="organism name" value="mouse"/>
</dbReference>
<dbReference type="PRO" id="PR:Q9ER88"/>
<dbReference type="Proteomes" id="UP000000589">
    <property type="component" value="Chromosome 3"/>
</dbReference>
<dbReference type="RNAct" id="Q9ER88">
    <property type="molecule type" value="protein"/>
</dbReference>
<dbReference type="Bgee" id="ENSMUSG00000068921">
    <property type="expression patterns" value="Expressed in spermatocyte and 273 other cell types or tissues"/>
</dbReference>
<dbReference type="ExpressionAtlas" id="Q9ER88">
    <property type="expression patterns" value="baseline and differential"/>
</dbReference>
<dbReference type="GO" id="GO:0005743">
    <property type="term" value="C:mitochondrial inner membrane"/>
    <property type="evidence" value="ECO:0000303"/>
    <property type="project" value="ComplexPortal"/>
</dbReference>
<dbReference type="GO" id="GO:0005759">
    <property type="term" value="C:mitochondrial matrix"/>
    <property type="evidence" value="ECO:0000314"/>
    <property type="project" value="MGI"/>
</dbReference>
<dbReference type="GO" id="GO:0005763">
    <property type="term" value="C:mitochondrial small ribosomal subunit"/>
    <property type="evidence" value="ECO:0000250"/>
    <property type="project" value="UniProtKB"/>
</dbReference>
<dbReference type="GO" id="GO:0005739">
    <property type="term" value="C:mitochondrion"/>
    <property type="evidence" value="ECO:0007005"/>
    <property type="project" value="MGI"/>
</dbReference>
<dbReference type="GO" id="GO:0005654">
    <property type="term" value="C:nucleoplasm"/>
    <property type="evidence" value="ECO:0007669"/>
    <property type="project" value="Ensembl"/>
</dbReference>
<dbReference type="GO" id="GO:0008637">
    <property type="term" value="P:apoptotic mitochondrial changes"/>
    <property type="evidence" value="ECO:0000314"/>
    <property type="project" value="MGI"/>
</dbReference>
<dbReference type="GO" id="GO:0032543">
    <property type="term" value="P:mitochondrial translation"/>
    <property type="evidence" value="ECO:0000303"/>
    <property type="project" value="ComplexPortal"/>
</dbReference>
<dbReference type="InterPro" id="IPR019368">
    <property type="entry name" value="Ribosomal_mS29"/>
</dbReference>
<dbReference type="InterPro" id="IPR008092">
    <property type="entry name" value="Ribosomal_mS29_met"/>
</dbReference>
<dbReference type="PANTHER" id="PTHR12810">
    <property type="entry name" value="MITOCHONDRIAL 28S RIBOSOMAL PROTEIN S29"/>
    <property type="match status" value="1"/>
</dbReference>
<dbReference type="PANTHER" id="PTHR12810:SF0">
    <property type="entry name" value="SMALL RIBOSOMAL SUBUNIT PROTEIN MS29"/>
    <property type="match status" value="1"/>
</dbReference>
<dbReference type="Pfam" id="PF10236">
    <property type="entry name" value="DAP3"/>
    <property type="match status" value="1"/>
</dbReference>
<dbReference type="PRINTS" id="PR01716">
    <property type="entry name" value="DEATHASSOCP3"/>
</dbReference>
<gene>
    <name evidence="2" type="primary">Dap3</name>
    <name evidence="2" type="synonym">Mrps29</name>
</gene>
<name>RT29_MOUSE</name>
<evidence type="ECO:0000250" key="1"/>
<evidence type="ECO:0000250" key="2">
    <source>
        <dbReference type="UniProtKB" id="P51398"/>
    </source>
</evidence>
<evidence type="ECO:0000256" key="3">
    <source>
        <dbReference type="SAM" id="MobiDB-lite"/>
    </source>
</evidence>
<evidence type="ECO:0000303" key="4">
    <source>
    </source>
</evidence>
<evidence type="ECO:0000305" key="5"/>
<accession>Q9ER88</accession>
<accession>Q8C2B2</accession>
<accession>Q8CCQ8</accession>
<accession>Q8VCK8</accession>
<accession>Q9CRT4</accession>
<accession>Q9CS11</accession>
<accession>Q9D5V9</accession>
<reference key="1">
    <citation type="journal article" date="2000" name="J. Cell Sci.">
        <title>The apoptosis mediator mDAP-3 is a novel member of a conserved family of mitochondrial proteins.</title>
        <authorList>
            <person name="Berger T."/>
            <person name="Brigl M."/>
            <person name="Herrmann J.M."/>
            <person name="Vielhauer V."/>
            <person name="Luckow B."/>
            <person name="Schloendorff D."/>
            <person name="Kretzler M."/>
        </authorList>
    </citation>
    <scope>NUCLEOTIDE SEQUENCE [MRNA] (ISOFORM 1)</scope>
    <source>
        <tissue>Embryonic kidney</tissue>
    </source>
</reference>
<reference key="2">
    <citation type="journal article" date="2005" name="Science">
        <title>The transcriptional landscape of the mammalian genome.</title>
        <authorList>
            <person name="Carninci P."/>
            <person name="Kasukawa T."/>
            <person name="Katayama S."/>
            <person name="Gough J."/>
            <person name="Frith M.C."/>
            <person name="Maeda N."/>
            <person name="Oyama R."/>
            <person name="Ravasi T."/>
            <person name="Lenhard B."/>
            <person name="Wells C."/>
            <person name="Kodzius R."/>
            <person name="Shimokawa K."/>
            <person name="Bajic V.B."/>
            <person name="Brenner S.E."/>
            <person name="Batalov S."/>
            <person name="Forrest A.R."/>
            <person name="Zavolan M."/>
            <person name="Davis M.J."/>
            <person name="Wilming L.G."/>
            <person name="Aidinis V."/>
            <person name="Allen J.E."/>
            <person name="Ambesi-Impiombato A."/>
            <person name="Apweiler R."/>
            <person name="Aturaliya R.N."/>
            <person name="Bailey T.L."/>
            <person name="Bansal M."/>
            <person name="Baxter L."/>
            <person name="Beisel K.W."/>
            <person name="Bersano T."/>
            <person name="Bono H."/>
            <person name="Chalk A.M."/>
            <person name="Chiu K.P."/>
            <person name="Choudhary V."/>
            <person name="Christoffels A."/>
            <person name="Clutterbuck D.R."/>
            <person name="Crowe M.L."/>
            <person name="Dalla E."/>
            <person name="Dalrymple B.P."/>
            <person name="de Bono B."/>
            <person name="Della Gatta G."/>
            <person name="di Bernardo D."/>
            <person name="Down T."/>
            <person name="Engstrom P."/>
            <person name="Fagiolini M."/>
            <person name="Faulkner G."/>
            <person name="Fletcher C.F."/>
            <person name="Fukushima T."/>
            <person name="Furuno M."/>
            <person name="Futaki S."/>
            <person name="Gariboldi M."/>
            <person name="Georgii-Hemming P."/>
            <person name="Gingeras T.R."/>
            <person name="Gojobori T."/>
            <person name="Green R.E."/>
            <person name="Gustincich S."/>
            <person name="Harbers M."/>
            <person name="Hayashi Y."/>
            <person name="Hensch T.K."/>
            <person name="Hirokawa N."/>
            <person name="Hill D."/>
            <person name="Huminiecki L."/>
            <person name="Iacono M."/>
            <person name="Ikeo K."/>
            <person name="Iwama A."/>
            <person name="Ishikawa T."/>
            <person name="Jakt M."/>
            <person name="Kanapin A."/>
            <person name="Katoh M."/>
            <person name="Kawasawa Y."/>
            <person name="Kelso J."/>
            <person name="Kitamura H."/>
            <person name="Kitano H."/>
            <person name="Kollias G."/>
            <person name="Krishnan S.P."/>
            <person name="Kruger A."/>
            <person name="Kummerfeld S.K."/>
            <person name="Kurochkin I.V."/>
            <person name="Lareau L.F."/>
            <person name="Lazarevic D."/>
            <person name="Lipovich L."/>
            <person name="Liu J."/>
            <person name="Liuni S."/>
            <person name="McWilliam S."/>
            <person name="Madan Babu M."/>
            <person name="Madera M."/>
            <person name="Marchionni L."/>
            <person name="Matsuda H."/>
            <person name="Matsuzawa S."/>
            <person name="Miki H."/>
            <person name="Mignone F."/>
            <person name="Miyake S."/>
            <person name="Morris K."/>
            <person name="Mottagui-Tabar S."/>
            <person name="Mulder N."/>
            <person name="Nakano N."/>
            <person name="Nakauchi H."/>
            <person name="Ng P."/>
            <person name="Nilsson R."/>
            <person name="Nishiguchi S."/>
            <person name="Nishikawa S."/>
            <person name="Nori F."/>
            <person name="Ohara O."/>
            <person name="Okazaki Y."/>
            <person name="Orlando V."/>
            <person name="Pang K.C."/>
            <person name="Pavan W.J."/>
            <person name="Pavesi G."/>
            <person name="Pesole G."/>
            <person name="Petrovsky N."/>
            <person name="Piazza S."/>
            <person name="Reed J."/>
            <person name="Reid J.F."/>
            <person name="Ring B.Z."/>
            <person name="Ringwald M."/>
            <person name="Rost B."/>
            <person name="Ruan Y."/>
            <person name="Salzberg S.L."/>
            <person name="Sandelin A."/>
            <person name="Schneider C."/>
            <person name="Schoenbach C."/>
            <person name="Sekiguchi K."/>
            <person name="Semple C.A."/>
            <person name="Seno S."/>
            <person name="Sessa L."/>
            <person name="Sheng Y."/>
            <person name="Shibata Y."/>
            <person name="Shimada H."/>
            <person name="Shimada K."/>
            <person name="Silva D."/>
            <person name="Sinclair B."/>
            <person name="Sperling S."/>
            <person name="Stupka E."/>
            <person name="Sugiura K."/>
            <person name="Sultana R."/>
            <person name="Takenaka Y."/>
            <person name="Taki K."/>
            <person name="Tammoja K."/>
            <person name="Tan S.L."/>
            <person name="Tang S."/>
            <person name="Taylor M.S."/>
            <person name="Tegner J."/>
            <person name="Teichmann S.A."/>
            <person name="Ueda H.R."/>
            <person name="van Nimwegen E."/>
            <person name="Verardo R."/>
            <person name="Wei C.L."/>
            <person name="Yagi K."/>
            <person name="Yamanishi H."/>
            <person name="Zabarovsky E."/>
            <person name="Zhu S."/>
            <person name="Zimmer A."/>
            <person name="Hide W."/>
            <person name="Bult C."/>
            <person name="Grimmond S.M."/>
            <person name="Teasdale R.D."/>
            <person name="Liu E.T."/>
            <person name="Brusic V."/>
            <person name="Quackenbush J."/>
            <person name="Wahlestedt C."/>
            <person name="Mattick J.S."/>
            <person name="Hume D.A."/>
            <person name="Kai C."/>
            <person name="Sasaki D."/>
            <person name="Tomaru Y."/>
            <person name="Fukuda S."/>
            <person name="Kanamori-Katayama M."/>
            <person name="Suzuki M."/>
            <person name="Aoki J."/>
            <person name="Arakawa T."/>
            <person name="Iida J."/>
            <person name="Imamura K."/>
            <person name="Itoh M."/>
            <person name="Kato T."/>
            <person name="Kawaji H."/>
            <person name="Kawagashira N."/>
            <person name="Kawashima T."/>
            <person name="Kojima M."/>
            <person name="Kondo S."/>
            <person name="Konno H."/>
            <person name="Nakano K."/>
            <person name="Ninomiya N."/>
            <person name="Nishio T."/>
            <person name="Okada M."/>
            <person name="Plessy C."/>
            <person name="Shibata K."/>
            <person name="Shiraki T."/>
            <person name="Suzuki S."/>
            <person name="Tagami M."/>
            <person name="Waki K."/>
            <person name="Watahiki A."/>
            <person name="Okamura-Oho Y."/>
            <person name="Suzuki H."/>
            <person name="Kawai J."/>
            <person name="Hayashizaki Y."/>
        </authorList>
    </citation>
    <scope>NUCLEOTIDE SEQUENCE [LARGE SCALE MRNA] (ISOFORMS 1 AND 2)</scope>
    <source>
        <strain>C57BL/6J</strain>
        <strain>FVB/N</strain>
        <strain>NOD</strain>
        <tissue>Embryo</tissue>
        <tissue>Embryonic head</tissue>
        <tissue>Olfactory bulb</tissue>
        <tissue>Testis</tissue>
        <tissue>Thymus</tissue>
    </source>
</reference>
<reference key="3">
    <citation type="journal article" date="2004" name="Genome Res.">
        <title>The status, quality, and expansion of the NIH full-length cDNA project: the Mammalian Gene Collection (MGC).</title>
        <authorList>
            <consortium name="The MGC Project Team"/>
        </authorList>
    </citation>
    <scope>NUCLEOTIDE SEQUENCE [LARGE SCALE MRNA] (ISOFORM 1)</scope>
    <source>
        <strain>FVB/N</strain>
        <tissue>Kidney</tissue>
    </source>
</reference>
<reference key="4">
    <citation type="journal article" date="2010" name="Cell">
        <title>A tissue-specific atlas of mouse protein phosphorylation and expression.</title>
        <authorList>
            <person name="Huttlin E.L."/>
            <person name="Jedrychowski M.P."/>
            <person name="Elias J.E."/>
            <person name="Goswami T."/>
            <person name="Rad R."/>
            <person name="Beausoleil S.A."/>
            <person name="Villen J."/>
            <person name="Haas W."/>
            <person name="Sowa M.E."/>
            <person name="Gygi S.P."/>
        </authorList>
    </citation>
    <scope>IDENTIFICATION BY MASS SPECTROMETRY [LARGE SCALE ANALYSIS]</scope>
    <source>
        <tissue>Brain</tissue>
        <tissue>Brown adipose tissue</tissue>
        <tissue>Heart</tissue>
        <tissue>Kidney</tissue>
        <tissue>Liver</tissue>
        <tissue>Lung</tissue>
        <tissue>Spleen</tissue>
        <tissue>Testis</tissue>
    </source>
</reference>
<protein>
    <recommendedName>
        <fullName evidence="5">Small ribosomal subunit protein mS29</fullName>
        <ecNumber evidence="2">3.6.5.-</ecNumber>
    </recommendedName>
    <alternativeName>
        <fullName>28S ribosomal protein S29, mitochondrial</fullName>
        <shortName>MRP-S29</shortName>
        <shortName>S29mt</shortName>
    </alternativeName>
    <alternativeName>
        <fullName evidence="2">Death-associated protein 3</fullName>
        <shortName>DAP-3</shortName>
    </alternativeName>
</protein>
<proteinExistence type="evidence at protein level"/>
<comment type="function">
    <text evidence="2">As a component of the mitochondrial small ribosomal subunit, it plays a role in the translation of mitochondrial mRNAs. Involved in mediating interferon-gamma-induced cell death. Displays GTPase activity in vitro.</text>
</comment>
<comment type="catalytic activity">
    <reaction evidence="2">
        <text>GTP + H2O = GDP + phosphate + H(+)</text>
        <dbReference type="Rhea" id="RHEA:19669"/>
        <dbReference type="ChEBI" id="CHEBI:15377"/>
        <dbReference type="ChEBI" id="CHEBI:15378"/>
        <dbReference type="ChEBI" id="CHEBI:37565"/>
        <dbReference type="ChEBI" id="CHEBI:43474"/>
        <dbReference type="ChEBI" id="CHEBI:58189"/>
    </reaction>
</comment>
<comment type="subunit">
    <text evidence="2">Component of the mitochondrial ribosome small subunit (28S) which comprises a 12S rRNA and about 30 distinct proteins. Interacts with DELE1. Interacts with NOA1.</text>
</comment>
<comment type="subcellular location">
    <subcellularLocation>
        <location evidence="2">Mitochondrion</location>
    </subcellularLocation>
</comment>
<comment type="alternative products">
    <event type="alternative splicing"/>
    <isoform>
        <id>Q9ER88-1</id>
        <name>1</name>
        <sequence type="displayed"/>
    </isoform>
    <isoform>
        <id>Q9ER88-2</id>
        <name>2</name>
        <sequence type="described" ref="VSP_008916"/>
    </isoform>
</comment>
<comment type="similarity">
    <text evidence="5">Belongs to the mitochondrion-specific ribosomal protein mS29 family.</text>
</comment>
<comment type="sequence caution" evidence="5">
    <conflict type="erroneous initiation">
        <sequence resource="EMBL-CDS" id="BAB29240"/>
    </conflict>
    <text>Extended N-terminus.</text>
</comment>
<comment type="sequence caution" evidence="5">
    <conflict type="erroneous initiation">
        <sequence resource="EMBL-CDS" id="BAB29605"/>
    </conflict>
    <text>Extended N-terminus.</text>
</comment>
<comment type="sequence caution" evidence="5">
    <conflict type="erroneous initiation">
        <sequence resource="EMBL-CDS" id="BAC27790"/>
    </conflict>
    <text>Extended N-terminus.</text>
</comment>
<comment type="sequence caution" evidence="5">
    <conflict type="erroneous initiation">
        <sequence resource="EMBL-CDS" id="BAC40673"/>
    </conflict>
    <text>Extended N-terminus.</text>
</comment>
<feature type="transit peptide" description="Mitochondrion" evidence="1">
    <location>
        <begin position="1"/>
        <end position="17"/>
    </location>
</feature>
<feature type="chain" id="PRO_0000087718" description="Small ribosomal subunit protein mS29">
    <location>
        <begin position="18"/>
        <end position="391"/>
    </location>
</feature>
<feature type="region of interest" description="Disordered" evidence="3">
    <location>
        <begin position="30"/>
        <end position="59"/>
    </location>
</feature>
<feature type="compositionally biased region" description="Basic and acidic residues" evidence="3">
    <location>
        <begin position="45"/>
        <end position="59"/>
    </location>
</feature>
<feature type="modified residue" description="N6-acetyllysine" evidence="2">
    <location>
        <position position="168"/>
    </location>
</feature>
<feature type="modified residue" description="N6-acetyllysine" evidence="2">
    <location>
        <position position="200"/>
    </location>
</feature>
<feature type="splice variant" id="VSP_008916" description="In isoform 2." evidence="4">
    <location>
        <begin position="295"/>
        <end position="324"/>
    </location>
</feature>
<feature type="sequence conflict" description="In Ref. 2; BAB29605." evidence="5" ref="2">
    <original>A</original>
    <variation>R</variation>
    <location>
        <position position="90"/>
    </location>
</feature>
<feature type="sequence conflict" description="In Ref. 2; BAC27790." evidence="5" ref="2">
    <original>H</original>
    <variation>N</variation>
    <location>
        <position position="141"/>
    </location>
</feature>
<feature type="sequence conflict" description="In Ref. 2; BAB29605." evidence="5" ref="2">
    <original>A</original>
    <variation>G</variation>
    <location>
        <position position="177"/>
    </location>
</feature>
<organism>
    <name type="scientific">Mus musculus</name>
    <name type="common">Mouse</name>
    <dbReference type="NCBI Taxonomy" id="10090"/>
    <lineage>
        <taxon>Eukaryota</taxon>
        <taxon>Metazoa</taxon>
        <taxon>Chordata</taxon>
        <taxon>Craniata</taxon>
        <taxon>Vertebrata</taxon>
        <taxon>Euteleostomi</taxon>
        <taxon>Mammalia</taxon>
        <taxon>Eutheria</taxon>
        <taxon>Euarchontoglires</taxon>
        <taxon>Glires</taxon>
        <taxon>Rodentia</taxon>
        <taxon>Myomorpha</taxon>
        <taxon>Muroidea</taxon>
        <taxon>Muridae</taxon>
        <taxon>Murinae</taxon>
        <taxon>Mus</taxon>
        <taxon>Mus</taxon>
    </lineage>
</organism>
<sequence>MLTGITRLFSRVQKLDPRCFLHMSVQATQNSQVPAERPRTVSRTSDSDPAKHGEQHEGQHYSIPLQDLKTVFPHGLPPRYMMQVKTFGEACLMVRKPALELLGYLKNTNFAHPAVRYLLYGEKGTGKTLSLCHAVHFCARHDWLILHIPDAHLWVKNCRELLQSTHNKQRFDQPLEASTWLKNFKTTNERFLSQIKVQEKYVWNKRESTEKGSPLGEVVEQGLTRVRNATDAVGVVLKELKAQSALGLFHLLVAVDGVNALWGRTTLKKEDRTLIAPEELSLVHNLRKMVKNDWHGGAIVLSLSQTGSLFKSRTAYLPHELLGKEGFNALEPFLPILIPNYNPKEFESSFQYYLENNWLQHEKASTEEGRKELRFLSNCNPEQLERLCASL</sequence>
<keyword id="KW-0002">3D-structure</keyword>
<keyword id="KW-0007">Acetylation</keyword>
<keyword id="KW-0025">Alternative splicing</keyword>
<keyword id="KW-0053">Apoptosis</keyword>
<keyword id="KW-0378">Hydrolase</keyword>
<keyword id="KW-0496">Mitochondrion</keyword>
<keyword id="KW-1185">Reference proteome</keyword>
<keyword id="KW-0687">Ribonucleoprotein</keyword>
<keyword id="KW-0689">Ribosomal protein</keyword>
<keyword id="KW-0809">Transit peptide</keyword>